<protein>
    <recommendedName>
        <fullName evidence="1">UDP-N-acetylglucosamine--N-acetylmuramyl-(pentapeptide) pyrophosphoryl-undecaprenol N-acetylglucosamine transferase</fullName>
        <ecNumber evidence="1">2.4.1.227</ecNumber>
    </recommendedName>
    <alternativeName>
        <fullName evidence="1">Undecaprenyl-PP-MurNAc-pentapeptide-UDPGlcNAc GlcNAc transferase</fullName>
    </alternativeName>
</protein>
<keyword id="KW-0131">Cell cycle</keyword>
<keyword id="KW-0132">Cell division</keyword>
<keyword id="KW-0997">Cell inner membrane</keyword>
<keyword id="KW-1003">Cell membrane</keyword>
<keyword id="KW-0133">Cell shape</keyword>
<keyword id="KW-0961">Cell wall biogenesis/degradation</keyword>
<keyword id="KW-0328">Glycosyltransferase</keyword>
<keyword id="KW-0472">Membrane</keyword>
<keyword id="KW-0573">Peptidoglycan synthesis</keyword>
<keyword id="KW-1185">Reference proteome</keyword>
<keyword id="KW-0808">Transferase</keyword>
<sequence>MTSSAPLILLAAGGTGGHLFPAEALGVELIKRGYRVRLVTDARALRYSGLFTKDMIDVVPSETVRSRSPVALARTALLLGTGTLAAFNLMRRLKPAAVIGFGGYPTVPPLLAARLAGVPSLIHDANAVLGRANRFLSAHVKAIATSLPGVLDRDPALSGKTTTVGTPMRPAILEAAAVPYAAPETAGPLRLLVVGGSQGARVMSDVVPGAIERLEPALWSRLVLTQQVRQEDMARVRAVYDRLKINAELQPFFTDLPARLAANHLVISRSGAGTVAELAAIGRPSILVPLPGAIDQDQYANAGVLSDANAAIRIVQSDFTSDRLASEISALAAEPVRLAAMAQAARAAGRLDAAERLADLVIKTAGL</sequence>
<name>MURG_BRASB</name>
<proteinExistence type="inferred from homology"/>
<comment type="function">
    <text evidence="1">Cell wall formation. Catalyzes the transfer of a GlcNAc subunit on undecaprenyl-pyrophosphoryl-MurNAc-pentapeptide (lipid intermediate I) to form undecaprenyl-pyrophosphoryl-MurNAc-(pentapeptide)GlcNAc (lipid intermediate II).</text>
</comment>
<comment type="catalytic activity">
    <reaction evidence="1">
        <text>di-trans,octa-cis-undecaprenyl diphospho-N-acetyl-alpha-D-muramoyl-L-alanyl-D-glutamyl-meso-2,6-diaminopimeloyl-D-alanyl-D-alanine + UDP-N-acetyl-alpha-D-glucosamine = di-trans,octa-cis-undecaprenyl diphospho-[N-acetyl-alpha-D-glucosaminyl-(1-&gt;4)]-N-acetyl-alpha-D-muramoyl-L-alanyl-D-glutamyl-meso-2,6-diaminopimeloyl-D-alanyl-D-alanine + UDP + H(+)</text>
        <dbReference type="Rhea" id="RHEA:31227"/>
        <dbReference type="ChEBI" id="CHEBI:15378"/>
        <dbReference type="ChEBI" id="CHEBI:57705"/>
        <dbReference type="ChEBI" id="CHEBI:58223"/>
        <dbReference type="ChEBI" id="CHEBI:61387"/>
        <dbReference type="ChEBI" id="CHEBI:61388"/>
        <dbReference type="EC" id="2.4.1.227"/>
    </reaction>
</comment>
<comment type="pathway">
    <text evidence="1">Cell wall biogenesis; peptidoglycan biosynthesis.</text>
</comment>
<comment type="subcellular location">
    <subcellularLocation>
        <location evidence="1">Cell inner membrane</location>
        <topology evidence="1">Peripheral membrane protein</topology>
        <orientation evidence="1">Cytoplasmic side</orientation>
    </subcellularLocation>
</comment>
<comment type="similarity">
    <text evidence="1">Belongs to the glycosyltransferase 28 family. MurG subfamily.</text>
</comment>
<gene>
    <name evidence="1" type="primary">murG</name>
    <name type="ordered locus">BBta_6174</name>
</gene>
<reference key="1">
    <citation type="journal article" date="2007" name="Science">
        <title>Legumes symbioses: absence of nod genes in photosynthetic bradyrhizobia.</title>
        <authorList>
            <person name="Giraud E."/>
            <person name="Moulin L."/>
            <person name="Vallenet D."/>
            <person name="Barbe V."/>
            <person name="Cytryn E."/>
            <person name="Avarre J.-C."/>
            <person name="Jaubert M."/>
            <person name="Simon D."/>
            <person name="Cartieaux F."/>
            <person name="Prin Y."/>
            <person name="Bena G."/>
            <person name="Hannibal L."/>
            <person name="Fardoux J."/>
            <person name="Kojadinovic M."/>
            <person name="Vuillet L."/>
            <person name="Lajus A."/>
            <person name="Cruveiller S."/>
            <person name="Rouy Z."/>
            <person name="Mangenot S."/>
            <person name="Segurens B."/>
            <person name="Dossat C."/>
            <person name="Franck W.L."/>
            <person name="Chang W.-S."/>
            <person name="Saunders E."/>
            <person name="Bruce D."/>
            <person name="Richardson P."/>
            <person name="Normand P."/>
            <person name="Dreyfus B."/>
            <person name="Pignol D."/>
            <person name="Stacey G."/>
            <person name="Emerich D."/>
            <person name="Vermeglio A."/>
            <person name="Medigue C."/>
            <person name="Sadowsky M."/>
        </authorList>
    </citation>
    <scope>NUCLEOTIDE SEQUENCE [LARGE SCALE GENOMIC DNA]</scope>
    <source>
        <strain>BTAi1 / ATCC BAA-1182</strain>
    </source>
</reference>
<organism>
    <name type="scientific">Bradyrhizobium sp. (strain BTAi1 / ATCC BAA-1182)</name>
    <dbReference type="NCBI Taxonomy" id="288000"/>
    <lineage>
        <taxon>Bacteria</taxon>
        <taxon>Pseudomonadati</taxon>
        <taxon>Pseudomonadota</taxon>
        <taxon>Alphaproteobacteria</taxon>
        <taxon>Hyphomicrobiales</taxon>
        <taxon>Nitrobacteraceae</taxon>
        <taxon>Bradyrhizobium</taxon>
    </lineage>
</organism>
<dbReference type="EC" id="2.4.1.227" evidence="1"/>
<dbReference type="EMBL" id="CP000494">
    <property type="protein sequence ID" value="ABQ38098.1"/>
    <property type="molecule type" value="Genomic_DNA"/>
</dbReference>
<dbReference type="RefSeq" id="WP_012046047.1">
    <property type="nucleotide sequence ID" value="NC_009485.1"/>
</dbReference>
<dbReference type="SMR" id="A5EPK4"/>
<dbReference type="STRING" id="288000.BBta_6174"/>
<dbReference type="CAZy" id="GT28">
    <property type="family name" value="Glycosyltransferase Family 28"/>
</dbReference>
<dbReference type="KEGG" id="bbt:BBta_6174"/>
<dbReference type="eggNOG" id="COG0707">
    <property type="taxonomic scope" value="Bacteria"/>
</dbReference>
<dbReference type="HOGENOM" id="CLU_037404_2_1_5"/>
<dbReference type="OrthoDB" id="9808936at2"/>
<dbReference type="UniPathway" id="UPA00219"/>
<dbReference type="Proteomes" id="UP000000246">
    <property type="component" value="Chromosome"/>
</dbReference>
<dbReference type="GO" id="GO:0005886">
    <property type="term" value="C:plasma membrane"/>
    <property type="evidence" value="ECO:0007669"/>
    <property type="project" value="UniProtKB-SubCell"/>
</dbReference>
<dbReference type="GO" id="GO:0051991">
    <property type="term" value="F:UDP-N-acetyl-D-glucosamine:N-acetylmuramoyl-L-alanyl-D-glutamyl-meso-2,6-diaminopimelyl-D-alanyl-D-alanine-diphosphoundecaprenol 4-beta-N-acetylglucosaminlytransferase activity"/>
    <property type="evidence" value="ECO:0007669"/>
    <property type="project" value="RHEA"/>
</dbReference>
<dbReference type="GO" id="GO:0050511">
    <property type="term" value="F:undecaprenyldiphospho-muramoylpentapeptide beta-N-acetylglucosaminyltransferase activity"/>
    <property type="evidence" value="ECO:0007669"/>
    <property type="project" value="UniProtKB-UniRule"/>
</dbReference>
<dbReference type="GO" id="GO:0005975">
    <property type="term" value="P:carbohydrate metabolic process"/>
    <property type="evidence" value="ECO:0007669"/>
    <property type="project" value="InterPro"/>
</dbReference>
<dbReference type="GO" id="GO:0051301">
    <property type="term" value="P:cell division"/>
    <property type="evidence" value="ECO:0007669"/>
    <property type="project" value="UniProtKB-KW"/>
</dbReference>
<dbReference type="GO" id="GO:0071555">
    <property type="term" value="P:cell wall organization"/>
    <property type="evidence" value="ECO:0007669"/>
    <property type="project" value="UniProtKB-KW"/>
</dbReference>
<dbReference type="GO" id="GO:0030259">
    <property type="term" value="P:lipid glycosylation"/>
    <property type="evidence" value="ECO:0007669"/>
    <property type="project" value="UniProtKB-UniRule"/>
</dbReference>
<dbReference type="GO" id="GO:0009252">
    <property type="term" value="P:peptidoglycan biosynthetic process"/>
    <property type="evidence" value="ECO:0007669"/>
    <property type="project" value="UniProtKB-UniRule"/>
</dbReference>
<dbReference type="GO" id="GO:0008360">
    <property type="term" value="P:regulation of cell shape"/>
    <property type="evidence" value="ECO:0007669"/>
    <property type="project" value="UniProtKB-KW"/>
</dbReference>
<dbReference type="CDD" id="cd03785">
    <property type="entry name" value="GT28_MurG"/>
    <property type="match status" value="1"/>
</dbReference>
<dbReference type="Gene3D" id="3.40.50.2000">
    <property type="entry name" value="Glycogen Phosphorylase B"/>
    <property type="match status" value="2"/>
</dbReference>
<dbReference type="HAMAP" id="MF_00033">
    <property type="entry name" value="MurG"/>
    <property type="match status" value="1"/>
</dbReference>
<dbReference type="InterPro" id="IPR006009">
    <property type="entry name" value="GlcNAc_MurG"/>
</dbReference>
<dbReference type="InterPro" id="IPR007235">
    <property type="entry name" value="Glyco_trans_28_C"/>
</dbReference>
<dbReference type="InterPro" id="IPR004276">
    <property type="entry name" value="GlycoTrans_28_N"/>
</dbReference>
<dbReference type="NCBIfam" id="TIGR01133">
    <property type="entry name" value="murG"/>
    <property type="match status" value="1"/>
</dbReference>
<dbReference type="PANTHER" id="PTHR21015:SF22">
    <property type="entry name" value="GLYCOSYLTRANSFERASE"/>
    <property type="match status" value="1"/>
</dbReference>
<dbReference type="PANTHER" id="PTHR21015">
    <property type="entry name" value="UDP-N-ACETYLGLUCOSAMINE--N-ACETYLMURAMYL-(PENTAPEPTIDE) PYROPHOSPHORYL-UNDECAPRENOL N-ACETYLGLUCOSAMINE TRANSFERASE 1"/>
    <property type="match status" value="1"/>
</dbReference>
<dbReference type="Pfam" id="PF04101">
    <property type="entry name" value="Glyco_tran_28_C"/>
    <property type="match status" value="1"/>
</dbReference>
<dbReference type="Pfam" id="PF03033">
    <property type="entry name" value="Glyco_transf_28"/>
    <property type="match status" value="1"/>
</dbReference>
<dbReference type="SUPFAM" id="SSF53756">
    <property type="entry name" value="UDP-Glycosyltransferase/glycogen phosphorylase"/>
    <property type="match status" value="1"/>
</dbReference>
<evidence type="ECO:0000255" key="1">
    <source>
        <dbReference type="HAMAP-Rule" id="MF_00033"/>
    </source>
</evidence>
<accession>A5EPK4</accession>
<feature type="chain" id="PRO_0000315073" description="UDP-N-acetylglucosamine--N-acetylmuramyl-(pentapeptide) pyrophosphoryl-undecaprenol N-acetylglucosamine transferase">
    <location>
        <begin position="1"/>
        <end position="367"/>
    </location>
</feature>
<feature type="binding site" evidence="1">
    <location>
        <begin position="15"/>
        <end position="17"/>
    </location>
    <ligand>
        <name>UDP-N-acetyl-alpha-D-glucosamine</name>
        <dbReference type="ChEBI" id="CHEBI:57705"/>
    </ligand>
</feature>
<feature type="binding site" evidence="1">
    <location>
        <position position="126"/>
    </location>
    <ligand>
        <name>UDP-N-acetyl-alpha-D-glucosamine</name>
        <dbReference type="ChEBI" id="CHEBI:57705"/>
    </ligand>
</feature>
<feature type="binding site" evidence="1">
    <location>
        <position position="169"/>
    </location>
    <ligand>
        <name>UDP-N-acetyl-alpha-D-glucosamine</name>
        <dbReference type="ChEBI" id="CHEBI:57705"/>
    </ligand>
</feature>
<feature type="binding site" evidence="1">
    <location>
        <position position="197"/>
    </location>
    <ligand>
        <name>UDP-N-acetyl-alpha-D-glucosamine</name>
        <dbReference type="ChEBI" id="CHEBI:57705"/>
    </ligand>
</feature>
<feature type="binding site" evidence="1">
    <location>
        <position position="298"/>
    </location>
    <ligand>
        <name>UDP-N-acetyl-alpha-D-glucosamine</name>
        <dbReference type="ChEBI" id="CHEBI:57705"/>
    </ligand>
</feature>